<gene>
    <name evidence="1" type="primary">rutF</name>
    <name type="ordered locus">E2348C_1058</name>
</gene>
<feature type="chain" id="PRO_0000403010" description="FMN reductase (NADH) RutF">
    <location>
        <begin position="1"/>
        <end position="164"/>
    </location>
</feature>
<keyword id="KW-0285">Flavoprotein</keyword>
<keyword id="KW-0288">FMN</keyword>
<keyword id="KW-0520">NAD</keyword>
<keyword id="KW-0560">Oxidoreductase</keyword>
<keyword id="KW-1185">Reference proteome</keyword>
<dbReference type="EC" id="1.5.1.42" evidence="1"/>
<dbReference type="EMBL" id="FM180568">
    <property type="protein sequence ID" value="CAS08606.1"/>
    <property type="molecule type" value="Genomic_DNA"/>
</dbReference>
<dbReference type="RefSeq" id="WP_001028090.1">
    <property type="nucleotide sequence ID" value="NC_011601.1"/>
</dbReference>
<dbReference type="SMR" id="B7UNZ0"/>
<dbReference type="KEGG" id="ecg:E2348C_1058"/>
<dbReference type="HOGENOM" id="CLU_059021_2_2_6"/>
<dbReference type="Proteomes" id="UP000008205">
    <property type="component" value="Chromosome"/>
</dbReference>
<dbReference type="GO" id="GO:0010181">
    <property type="term" value="F:FMN binding"/>
    <property type="evidence" value="ECO:0007669"/>
    <property type="project" value="InterPro"/>
</dbReference>
<dbReference type="GO" id="GO:0052874">
    <property type="term" value="F:FMN reductase (NADH) activity"/>
    <property type="evidence" value="ECO:0007669"/>
    <property type="project" value="UniProtKB-EC"/>
</dbReference>
<dbReference type="GO" id="GO:0008752">
    <property type="term" value="F:FMN reductase [NAD(P)H] activity"/>
    <property type="evidence" value="ECO:0007669"/>
    <property type="project" value="InterPro"/>
</dbReference>
<dbReference type="GO" id="GO:0042602">
    <property type="term" value="F:riboflavin reductase (NADPH) activity"/>
    <property type="evidence" value="ECO:0007669"/>
    <property type="project" value="UniProtKB-UniRule"/>
</dbReference>
<dbReference type="GO" id="GO:0019740">
    <property type="term" value="P:nitrogen utilization"/>
    <property type="evidence" value="ECO:0007669"/>
    <property type="project" value="UniProtKB-UniRule"/>
</dbReference>
<dbReference type="GO" id="GO:0006212">
    <property type="term" value="P:uracil catabolic process"/>
    <property type="evidence" value="ECO:0007669"/>
    <property type="project" value="UniProtKB-UniRule"/>
</dbReference>
<dbReference type="FunFam" id="2.30.110.10:FF:000002">
    <property type="entry name" value="FMN reductase (NADH) RutF"/>
    <property type="match status" value="1"/>
</dbReference>
<dbReference type="Gene3D" id="2.30.110.10">
    <property type="entry name" value="Electron Transport, Fmn-binding Protein, Chain A"/>
    <property type="match status" value="1"/>
</dbReference>
<dbReference type="HAMAP" id="MF_00833">
    <property type="entry name" value="RutF"/>
    <property type="match status" value="1"/>
</dbReference>
<dbReference type="InterPro" id="IPR002563">
    <property type="entry name" value="Flavin_Rdtase-like_dom"/>
</dbReference>
<dbReference type="InterPro" id="IPR050268">
    <property type="entry name" value="NADH-dep_flavin_reductase"/>
</dbReference>
<dbReference type="InterPro" id="IPR019917">
    <property type="entry name" value="RutF"/>
</dbReference>
<dbReference type="InterPro" id="IPR012349">
    <property type="entry name" value="Split_barrel_FMN-bd"/>
</dbReference>
<dbReference type="NCBIfam" id="TIGR03615">
    <property type="entry name" value="RutF"/>
    <property type="match status" value="1"/>
</dbReference>
<dbReference type="PANTHER" id="PTHR30466">
    <property type="entry name" value="FLAVIN REDUCTASE"/>
    <property type="match status" value="1"/>
</dbReference>
<dbReference type="PANTHER" id="PTHR30466:SF1">
    <property type="entry name" value="FMN REDUCTASE (NADH) RUTF"/>
    <property type="match status" value="1"/>
</dbReference>
<dbReference type="Pfam" id="PF01613">
    <property type="entry name" value="Flavin_Reduct"/>
    <property type="match status" value="1"/>
</dbReference>
<dbReference type="SMART" id="SM00903">
    <property type="entry name" value="Flavin_Reduct"/>
    <property type="match status" value="1"/>
</dbReference>
<dbReference type="SUPFAM" id="SSF50475">
    <property type="entry name" value="FMN-binding split barrel"/>
    <property type="match status" value="1"/>
</dbReference>
<accession>B7UNZ0</accession>
<comment type="function">
    <text evidence="1">Catalyzes the reduction of FMN to FMNH2 which is used to reduce pyrimidine by RutA via the Rut pathway.</text>
</comment>
<comment type="catalytic activity">
    <reaction evidence="1">
        <text>FMNH2 + NAD(+) = FMN + NADH + 2 H(+)</text>
        <dbReference type="Rhea" id="RHEA:21620"/>
        <dbReference type="ChEBI" id="CHEBI:15378"/>
        <dbReference type="ChEBI" id="CHEBI:57540"/>
        <dbReference type="ChEBI" id="CHEBI:57618"/>
        <dbReference type="ChEBI" id="CHEBI:57945"/>
        <dbReference type="ChEBI" id="CHEBI:58210"/>
        <dbReference type="EC" id="1.5.1.42"/>
    </reaction>
</comment>
<comment type="induction">
    <text evidence="1">Up-regulated by the nitrogen regulatory protein C (NtrC also called GlnG) and repressed by RutR.</text>
</comment>
<comment type="similarity">
    <text evidence="1">Belongs to the non-flavoprotein flavin reductase family. RutF subfamily.</text>
</comment>
<organism>
    <name type="scientific">Escherichia coli O127:H6 (strain E2348/69 / EPEC)</name>
    <dbReference type="NCBI Taxonomy" id="574521"/>
    <lineage>
        <taxon>Bacteria</taxon>
        <taxon>Pseudomonadati</taxon>
        <taxon>Pseudomonadota</taxon>
        <taxon>Gammaproteobacteria</taxon>
        <taxon>Enterobacterales</taxon>
        <taxon>Enterobacteriaceae</taxon>
        <taxon>Escherichia</taxon>
    </lineage>
</organism>
<name>RUTF_ECO27</name>
<evidence type="ECO:0000255" key="1">
    <source>
        <dbReference type="HAMAP-Rule" id="MF_00833"/>
    </source>
</evidence>
<protein>
    <recommendedName>
        <fullName evidence="1">FMN reductase (NADH) RutF</fullName>
        <ecNumber evidence="1">1.5.1.42</ecNumber>
    </recommendedName>
    <alternativeName>
        <fullName evidence="1">FMN reductase</fullName>
    </alternativeName>
    <alternativeName>
        <fullName evidence="1">NADH-flavin reductase RutF</fullName>
    </alternativeName>
    <alternativeName>
        <fullName evidence="1">NADH:flavin oxidoreductase</fullName>
    </alternativeName>
</protein>
<reference key="1">
    <citation type="journal article" date="2009" name="J. Bacteriol.">
        <title>Complete genome sequence and comparative genome analysis of enteropathogenic Escherichia coli O127:H6 strain E2348/69.</title>
        <authorList>
            <person name="Iguchi A."/>
            <person name="Thomson N.R."/>
            <person name="Ogura Y."/>
            <person name="Saunders D."/>
            <person name="Ooka T."/>
            <person name="Henderson I.R."/>
            <person name="Harris D."/>
            <person name="Asadulghani M."/>
            <person name="Kurokawa K."/>
            <person name="Dean P."/>
            <person name="Kenny B."/>
            <person name="Quail M.A."/>
            <person name="Thurston S."/>
            <person name="Dougan G."/>
            <person name="Hayashi T."/>
            <person name="Parkhill J."/>
            <person name="Frankel G."/>
        </authorList>
    </citation>
    <scope>NUCLEOTIDE SEQUENCE [LARGE SCALE GENOMIC DNA]</scope>
    <source>
        <strain>E2348/69 / EPEC</strain>
    </source>
</reference>
<proteinExistence type="inferred from homology"/>
<sequence length="164" mass="17804">MNIVDQQTFRDAMSCMGAAVNIITTDGPAGRAGFTASAVCSVTDTPPTLLVCLNRGASVWPVFNENRTLCVNTLSAGQEPLSNLFGGKTPMEHRFAAARWQTGVTGCPQLEEALVSFDCRINQVVSVGTHDILFCTIEAIHRHATPYGLVWFDRSYHALMRPAC</sequence>